<dbReference type="EMBL" id="AL935332">
    <property type="protein sequence ID" value="CAK11175.2"/>
    <property type="molecule type" value="Genomic_DNA"/>
</dbReference>
<dbReference type="EMBL" id="BC122265">
    <property type="protein sequence ID" value="AAI22266.1"/>
    <property type="molecule type" value="mRNA"/>
</dbReference>
<dbReference type="RefSeq" id="NP_001119890.1">
    <property type="nucleotide sequence ID" value="NM_001126418.1"/>
</dbReference>
<dbReference type="SMR" id="Q0P457"/>
<dbReference type="FunCoup" id="Q0P457">
    <property type="interactions" value="1340"/>
</dbReference>
<dbReference type="STRING" id="7955.ENSDARP00000070956"/>
<dbReference type="PaxDb" id="7955-ENSDARP00000113245"/>
<dbReference type="Ensembl" id="ENSDART00000076484">
    <property type="protein sequence ID" value="ENSDARP00000070956"/>
    <property type="gene ID" value="ENSDARG00000054301"/>
</dbReference>
<dbReference type="Ensembl" id="ENSDART00000136776">
    <property type="protein sequence ID" value="ENSDARP00000113245"/>
    <property type="gene ID" value="ENSDARG00000054301"/>
</dbReference>
<dbReference type="GeneID" id="751662"/>
<dbReference type="KEGG" id="dre:751662"/>
<dbReference type="AGR" id="ZFIN:ZDB-GENE-060825-174"/>
<dbReference type="CTD" id="112970"/>
<dbReference type="ZFIN" id="ZDB-GENE-060825-174">
    <property type="gene designation" value="kti12"/>
</dbReference>
<dbReference type="eggNOG" id="KOG3062">
    <property type="taxonomic scope" value="Eukaryota"/>
</dbReference>
<dbReference type="HOGENOM" id="CLU_027147_1_0_1"/>
<dbReference type="InParanoid" id="Q0P457"/>
<dbReference type="OMA" id="THSRWDK"/>
<dbReference type="OrthoDB" id="9972657at2759"/>
<dbReference type="PhylomeDB" id="Q0P457"/>
<dbReference type="TreeFam" id="TF312974"/>
<dbReference type="PRO" id="PR:Q0P457"/>
<dbReference type="Proteomes" id="UP000000437">
    <property type="component" value="Alternate scaffold 18"/>
</dbReference>
<dbReference type="Proteomes" id="UP000000437">
    <property type="component" value="Chromosome 18"/>
</dbReference>
<dbReference type="Bgee" id="ENSDARG00000054301">
    <property type="expression patterns" value="Expressed in early embryo and 22 other cell types or tissues"/>
</dbReference>
<dbReference type="GO" id="GO:0005524">
    <property type="term" value="F:ATP binding"/>
    <property type="evidence" value="ECO:0007669"/>
    <property type="project" value="UniProtKB-KW"/>
</dbReference>
<dbReference type="GO" id="GO:0002098">
    <property type="term" value="P:tRNA wobble uridine modification"/>
    <property type="evidence" value="ECO:0000318"/>
    <property type="project" value="GO_Central"/>
</dbReference>
<dbReference type="FunFam" id="3.40.50.300:FF:000827">
    <property type="entry name" value="KTI12 chromatin-associated homolog"/>
    <property type="match status" value="1"/>
</dbReference>
<dbReference type="Gene3D" id="3.40.50.300">
    <property type="entry name" value="P-loop containing nucleotide triphosphate hydrolases"/>
    <property type="match status" value="1"/>
</dbReference>
<dbReference type="InterPro" id="IPR013641">
    <property type="entry name" value="KTI12/PSTK"/>
</dbReference>
<dbReference type="InterPro" id="IPR027417">
    <property type="entry name" value="P-loop_NTPase"/>
</dbReference>
<dbReference type="PANTHER" id="PTHR12435">
    <property type="match status" value="1"/>
</dbReference>
<dbReference type="Pfam" id="PF08433">
    <property type="entry name" value="KTI12"/>
    <property type="match status" value="1"/>
</dbReference>
<dbReference type="SUPFAM" id="SSF52540">
    <property type="entry name" value="P-loop containing nucleoside triphosphate hydrolases"/>
    <property type="match status" value="1"/>
</dbReference>
<accession>Q0P457</accession>
<accession>Q1MT61</accession>
<comment type="similarity">
    <text evidence="2">Belongs to the KTI12 family.</text>
</comment>
<keyword id="KW-0067">ATP-binding</keyword>
<keyword id="KW-0547">Nucleotide-binding</keyword>
<keyword id="KW-1185">Reference proteome</keyword>
<proteinExistence type="evidence at transcript level"/>
<reference key="1">
    <citation type="journal article" date="2013" name="Nature">
        <title>The zebrafish reference genome sequence and its relationship to the human genome.</title>
        <authorList>
            <person name="Howe K."/>
            <person name="Clark M.D."/>
            <person name="Torroja C.F."/>
            <person name="Torrance J."/>
            <person name="Berthelot C."/>
            <person name="Muffato M."/>
            <person name="Collins J.E."/>
            <person name="Humphray S."/>
            <person name="McLaren K."/>
            <person name="Matthews L."/>
            <person name="McLaren S."/>
            <person name="Sealy I."/>
            <person name="Caccamo M."/>
            <person name="Churcher C."/>
            <person name="Scott C."/>
            <person name="Barrett J.C."/>
            <person name="Koch R."/>
            <person name="Rauch G.J."/>
            <person name="White S."/>
            <person name="Chow W."/>
            <person name="Kilian B."/>
            <person name="Quintais L.T."/>
            <person name="Guerra-Assuncao J.A."/>
            <person name="Zhou Y."/>
            <person name="Gu Y."/>
            <person name="Yen J."/>
            <person name="Vogel J.H."/>
            <person name="Eyre T."/>
            <person name="Redmond S."/>
            <person name="Banerjee R."/>
            <person name="Chi J."/>
            <person name="Fu B."/>
            <person name="Langley E."/>
            <person name="Maguire S.F."/>
            <person name="Laird G.K."/>
            <person name="Lloyd D."/>
            <person name="Kenyon E."/>
            <person name="Donaldson S."/>
            <person name="Sehra H."/>
            <person name="Almeida-King J."/>
            <person name="Loveland J."/>
            <person name="Trevanion S."/>
            <person name="Jones M."/>
            <person name="Quail M."/>
            <person name="Willey D."/>
            <person name="Hunt A."/>
            <person name="Burton J."/>
            <person name="Sims S."/>
            <person name="McLay K."/>
            <person name="Plumb B."/>
            <person name="Davis J."/>
            <person name="Clee C."/>
            <person name="Oliver K."/>
            <person name="Clark R."/>
            <person name="Riddle C."/>
            <person name="Elliot D."/>
            <person name="Threadgold G."/>
            <person name="Harden G."/>
            <person name="Ware D."/>
            <person name="Begum S."/>
            <person name="Mortimore B."/>
            <person name="Kerry G."/>
            <person name="Heath P."/>
            <person name="Phillimore B."/>
            <person name="Tracey A."/>
            <person name="Corby N."/>
            <person name="Dunn M."/>
            <person name="Johnson C."/>
            <person name="Wood J."/>
            <person name="Clark S."/>
            <person name="Pelan S."/>
            <person name="Griffiths G."/>
            <person name="Smith M."/>
            <person name="Glithero R."/>
            <person name="Howden P."/>
            <person name="Barker N."/>
            <person name="Lloyd C."/>
            <person name="Stevens C."/>
            <person name="Harley J."/>
            <person name="Holt K."/>
            <person name="Panagiotidis G."/>
            <person name="Lovell J."/>
            <person name="Beasley H."/>
            <person name="Henderson C."/>
            <person name="Gordon D."/>
            <person name="Auger K."/>
            <person name="Wright D."/>
            <person name="Collins J."/>
            <person name="Raisen C."/>
            <person name="Dyer L."/>
            <person name="Leung K."/>
            <person name="Robertson L."/>
            <person name="Ambridge K."/>
            <person name="Leongamornlert D."/>
            <person name="McGuire S."/>
            <person name="Gilderthorp R."/>
            <person name="Griffiths C."/>
            <person name="Manthravadi D."/>
            <person name="Nichol S."/>
            <person name="Barker G."/>
            <person name="Whitehead S."/>
            <person name="Kay M."/>
            <person name="Brown J."/>
            <person name="Murnane C."/>
            <person name="Gray E."/>
            <person name="Humphries M."/>
            <person name="Sycamore N."/>
            <person name="Barker D."/>
            <person name="Saunders D."/>
            <person name="Wallis J."/>
            <person name="Babbage A."/>
            <person name="Hammond S."/>
            <person name="Mashreghi-Mohammadi M."/>
            <person name="Barr L."/>
            <person name="Martin S."/>
            <person name="Wray P."/>
            <person name="Ellington A."/>
            <person name="Matthews N."/>
            <person name="Ellwood M."/>
            <person name="Woodmansey R."/>
            <person name="Clark G."/>
            <person name="Cooper J."/>
            <person name="Tromans A."/>
            <person name="Grafham D."/>
            <person name="Skuce C."/>
            <person name="Pandian R."/>
            <person name="Andrews R."/>
            <person name="Harrison E."/>
            <person name="Kimberley A."/>
            <person name="Garnett J."/>
            <person name="Fosker N."/>
            <person name="Hall R."/>
            <person name="Garner P."/>
            <person name="Kelly D."/>
            <person name="Bird C."/>
            <person name="Palmer S."/>
            <person name="Gehring I."/>
            <person name="Berger A."/>
            <person name="Dooley C.M."/>
            <person name="Ersan-Urun Z."/>
            <person name="Eser C."/>
            <person name="Geiger H."/>
            <person name="Geisler M."/>
            <person name="Karotki L."/>
            <person name="Kirn A."/>
            <person name="Konantz J."/>
            <person name="Konantz M."/>
            <person name="Oberlander M."/>
            <person name="Rudolph-Geiger S."/>
            <person name="Teucke M."/>
            <person name="Lanz C."/>
            <person name="Raddatz G."/>
            <person name="Osoegawa K."/>
            <person name="Zhu B."/>
            <person name="Rapp A."/>
            <person name="Widaa S."/>
            <person name="Langford C."/>
            <person name="Yang F."/>
            <person name="Schuster S.C."/>
            <person name="Carter N.P."/>
            <person name="Harrow J."/>
            <person name="Ning Z."/>
            <person name="Herrero J."/>
            <person name="Searle S.M."/>
            <person name="Enright A."/>
            <person name="Geisler R."/>
            <person name="Plasterk R.H."/>
            <person name="Lee C."/>
            <person name="Westerfield M."/>
            <person name="de Jong P.J."/>
            <person name="Zon L.I."/>
            <person name="Postlethwait J.H."/>
            <person name="Nusslein-Volhard C."/>
            <person name="Hubbard T.J."/>
            <person name="Roest Crollius H."/>
            <person name="Rogers J."/>
            <person name="Stemple D.L."/>
        </authorList>
    </citation>
    <scope>NUCLEOTIDE SEQUENCE [LARGE SCALE GENOMIC DNA]</scope>
    <source>
        <strain>Tuebingen</strain>
    </source>
</reference>
<reference key="2">
    <citation type="submission" date="2006-08" db="EMBL/GenBank/DDBJ databases">
        <authorList>
            <consortium name="NIH - Zebrafish Gene Collection (ZGC) project"/>
        </authorList>
    </citation>
    <scope>NUCLEOTIDE SEQUENCE [LARGE SCALE MRNA]</scope>
    <source>
        <tissue>Eye</tissue>
    </source>
</reference>
<protein>
    <recommendedName>
        <fullName>Protein KTI12 homolog</fullName>
    </recommendedName>
</protein>
<feature type="chain" id="PRO_0000285689" description="Protein KTI12 homolog">
    <location>
        <begin position="1"/>
        <end position="275"/>
    </location>
</feature>
<feature type="binding site" evidence="1">
    <location>
        <begin position="8"/>
        <end position="15"/>
    </location>
    <ligand>
        <name>ATP</name>
        <dbReference type="ChEBI" id="CHEBI:30616"/>
    </ligand>
</feature>
<feature type="sequence conflict" description="In Ref. 2; AAI22266." evidence="2" ref="2">
    <original>K</original>
    <variation>R</variation>
    <location>
        <position position="212"/>
    </location>
</feature>
<gene>
    <name type="primary">kti12</name>
    <name type="ORF">si:dkey-77f17.5</name>
    <name type="ORF">zgc:153393</name>
</gene>
<organism>
    <name type="scientific">Danio rerio</name>
    <name type="common">Zebrafish</name>
    <name type="synonym">Brachydanio rerio</name>
    <dbReference type="NCBI Taxonomy" id="7955"/>
    <lineage>
        <taxon>Eukaryota</taxon>
        <taxon>Metazoa</taxon>
        <taxon>Chordata</taxon>
        <taxon>Craniata</taxon>
        <taxon>Vertebrata</taxon>
        <taxon>Euteleostomi</taxon>
        <taxon>Actinopterygii</taxon>
        <taxon>Neopterygii</taxon>
        <taxon>Teleostei</taxon>
        <taxon>Ostariophysi</taxon>
        <taxon>Cypriniformes</taxon>
        <taxon>Danionidae</taxon>
        <taxon>Danioninae</taxon>
        <taxon>Danio</taxon>
    </lineage>
</organism>
<name>KTI12_DANRE</name>
<evidence type="ECO:0000255" key="1"/>
<evidence type="ECO:0000305" key="2"/>
<sequence length="275" mass="31606">MPLILMCGYPCSGKTRRAQELRDYFTQNTGRKVHIVGDEDQGIDKNSVYADSQKEKNLRGALRAEVERKVNKDDIVILDSLNYIKGYRYELFCLIKHTQTPHCLVYSLTSADLSSEWNKDREADSQYTQEILDALILRFEAPDSRNRWDSPLFTIQQDDSLPFEAICDALFKRKAPPPNQSTKSQPLSSTNFLYELDKVTQDVLMAVLESQKTSVPGDLISIPGATEKIELTRSLNMVELRKLRRQFISYTKMHPTENIGQIANMFVQYLNKSMH</sequence>